<organism>
    <name type="scientific">Geotalea daltonii (strain DSM 22248 / JCM 15807 / FRC-32)</name>
    <name type="common">Geobacter daltonii</name>
    <dbReference type="NCBI Taxonomy" id="316067"/>
    <lineage>
        <taxon>Bacteria</taxon>
        <taxon>Pseudomonadati</taxon>
        <taxon>Thermodesulfobacteriota</taxon>
        <taxon>Desulfuromonadia</taxon>
        <taxon>Geobacterales</taxon>
        <taxon>Geobacteraceae</taxon>
        <taxon>Geotalea</taxon>
    </lineage>
</organism>
<name>HIS6_GEODF</name>
<dbReference type="EC" id="4.3.2.10" evidence="1"/>
<dbReference type="EMBL" id="CP001390">
    <property type="protein sequence ID" value="ACM19057.1"/>
    <property type="molecule type" value="Genomic_DNA"/>
</dbReference>
<dbReference type="RefSeq" id="WP_012645786.1">
    <property type="nucleotide sequence ID" value="NC_011979.1"/>
</dbReference>
<dbReference type="SMR" id="B9M0M0"/>
<dbReference type="STRING" id="316067.Geob_0693"/>
<dbReference type="KEGG" id="geo:Geob_0693"/>
<dbReference type="eggNOG" id="COG0107">
    <property type="taxonomic scope" value="Bacteria"/>
</dbReference>
<dbReference type="HOGENOM" id="CLU_048577_4_0_7"/>
<dbReference type="OrthoDB" id="9807749at2"/>
<dbReference type="UniPathway" id="UPA00031">
    <property type="reaction ID" value="UER00010"/>
</dbReference>
<dbReference type="Proteomes" id="UP000007721">
    <property type="component" value="Chromosome"/>
</dbReference>
<dbReference type="GO" id="GO:0005737">
    <property type="term" value="C:cytoplasm"/>
    <property type="evidence" value="ECO:0007669"/>
    <property type="project" value="UniProtKB-SubCell"/>
</dbReference>
<dbReference type="GO" id="GO:0000107">
    <property type="term" value="F:imidazoleglycerol-phosphate synthase activity"/>
    <property type="evidence" value="ECO:0007669"/>
    <property type="project" value="UniProtKB-UniRule"/>
</dbReference>
<dbReference type="GO" id="GO:0016829">
    <property type="term" value="F:lyase activity"/>
    <property type="evidence" value="ECO:0007669"/>
    <property type="project" value="UniProtKB-KW"/>
</dbReference>
<dbReference type="GO" id="GO:0000105">
    <property type="term" value="P:L-histidine biosynthetic process"/>
    <property type="evidence" value="ECO:0007669"/>
    <property type="project" value="UniProtKB-UniRule"/>
</dbReference>
<dbReference type="CDD" id="cd04731">
    <property type="entry name" value="HisF"/>
    <property type="match status" value="1"/>
</dbReference>
<dbReference type="FunFam" id="3.20.20.70:FF:000006">
    <property type="entry name" value="Imidazole glycerol phosphate synthase subunit HisF"/>
    <property type="match status" value="1"/>
</dbReference>
<dbReference type="Gene3D" id="3.20.20.70">
    <property type="entry name" value="Aldolase class I"/>
    <property type="match status" value="1"/>
</dbReference>
<dbReference type="HAMAP" id="MF_01013">
    <property type="entry name" value="HisF"/>
    <property type="match status" value="1"/>
</dbReference>
<dbReference type="InterPro" id="IPR013785">
    <property type="entry name" value="Aldolase_TIM"/>
</dbReference>
<dbReference type="InterPro" id="IPR006062">
    <property type="entry name" value="His_biosynth"/>
</dbReference>
<dbReference type="InterPro" id="IPR004651">
    <property type="entry name" value="HisF"/>
</dbReference>
<dbReference type="InterPro" id="IPR050064">
    <property type="entry name" value="IGPS_HisA/HisF"/>
</dbReference>
<dbReference type="InterPro" id="IPR011060">
    <property type="entry name" value="RibuloseP-bd_barrel"/>
</dbReference>
<dbReference type="NCBIfam" id="TIGR00735">
    <property type="entry name" value="hisF"/>
    <property type="match status" value="1"/>
</dbReference>
<dbReference type="PANTHER" id="PTHR21235:SF2">
    <property type="entry name" value="IMIDAZOLE GLYCEROL PHOSPHATE SYNTHASE HISHF"/>
    <property type="match status" value="1"/>
</dbReference>
<dbReference type="PANTHER" id="PTHR21235">
    <property type="entry name" value="IMIDAZOLE GLYCEROL PHOSPHATE SYNTHASE SUBUNIT HISF/H IGP SYNTHASE SUBUNIT HISF/H"/>
    <property type="match status" value="1"/>
</dbReference>
<dbReference type="Pfam" id="PF00977">
    <property type="entry name" value="His_biosynth"/>
    <property type="match status" value="1"/>
</dbReference>
<dbReference type="SUPFAM" id="SSF51366">
    <property type="entry name" value="Ribulose-phoshate binding barrel"/>
    <property type="match status" value="1"/>
</dbReference>
<protein>
    <recommendedName>
        <fullName evidence="1">Imidazole glycerol phosphate synthase subunit HisF</fullName>
        <ecNumber evidence="1">4.3.2.10</ecNumber>
    </recommendedName>
    <alternativeName>
        <fullName evidence="1">IGP synthase cyclase subunit</fullName>
    </alternativeName>
    <alternativeName>
        <fullName evidence="1">IGP synthase subunit HisF</fullName>
    </alternativeName>
    <alternativeName>
        <fullName evidence="1">ImGP synthase subunit HisF</fullName>
        <shortName evidence="1">IGPS subunit HisF</shortName>
    </alternativeName>
</protein>
<gene>
    <name evidence="1" type="primary">hisF</name>
    <name type="ordered locus">Geob_0693</name>
</gene>
<proteinExistence type="inferred from homology"/>
<evidence type="ECO:0000255" key="1">
    <source>
        <dbReference type="HAMAP-Rule" id="MF_01013"/>
    </source>
</evidence>
<accession>B9M0M0</accession>
<sequence length="253" mass="27572">MLTKRIIPCLDVKGGRVVKGVQFLELRDAGDPVEIAEIYDRQGADELTFLDITASSDARDIIIDVVRRTAERVFMPLTVGGGVRTVDDIRRLLNAGADKVSINTAAVHRPEFVKEAAERFGSQCTVVAIDARRVPGEDRWEVYTHGGRNATGIDAVEWAQRMEEYGSGEILLTSMDCDGTKDGYDLSLTRSVTDAVGIPVIASGGVGNLEHFYDGFTNGGASACLAASIFHYREYTIQEAKEYLKGKGVPVRL</sequence>
<reference key="1">
    <citation type="submission" date="2009-01" db="EMBL/GenBank/DDBJ databases">
        <title>Complete sequence of Geobacter sp. FRC-32.</title>
        <authorList>
            <consortium name="US DOE Joint Genome Institute"/>
            <person name="Lucas S."/>
            <person name="Copeland A."/>
            <person name="Lapidus A."/>
            <person name="Glavina del Rio T."/>
            <person name="Dalin E."/>
            <person name="Tice H."/>
            <person name="Bruce D."/>
            <person name="Goodwin L."/>
            <person name="Pitluck S."/>
            <person name="Saunders E."/>
            <person name="Brettin T."/>
            <person name="Detter J.C."/>
            <person name="Han C."/>
            <person name="Larimer F."/>
            <person name="Land M."/>
            <person name="Hauser L."/>
            <person name="Kyrpides N."/>
            <person name="Ovchinnikova G."/>
            <person name="Kostka J."/>
            <person name="Richardson P."/>
        </authorList>
    </citation>
    <scope>NUCLEOTIDE SEQUENCE [LARGE SCALE GENOMIC DNA]</scope>
    <source>
        <strain>DSM 22248 / JCM 15807 / FRC-32</strain>
    </source>
</reference>
<comment type="function">
    <text evidence="1">IGPS catalyzes the conversion of PRFAR and glutamine to IGP, AICAR and glutamate. The HisF subunit catalyzes the cyclization activity that produces IGP and AICAR from PRFAR using the ammonia provided by the HisH subunit.</text>
</comment>
<comment type="catalytic activity">
    <reaction evidence="1">
        <text>5-[(5-phospho-1-deoxy-D-ribulos-1-ylimino)methylamino]-1-(5-phospho-beta-D-ribosyl)imidazole-4-carboxamide + L-glutamine = D-erythro-1-(imidazol-4-yl)glycerol 3-phosphate + 5-amino-1-(5-phospho-beta-D-ribosyl)imidazole-4-carboxamide + L-glutamate + H(+)</text>
        <dbReference type="Rhea" id="RHEA:24793"/>
        <dbReference type="ChEBI" id="CHEBI:15378"/>
        <dbReference type="ChEBI" id="CHEBI:29985"/>
        <dbReference type="ChEBI" id="CHEBI:58278"/>
        <dbReference type="ChEBI" id="CHEBI:58359"/>
        <dbReference type="ChEBI" id="CHEBI:58475"/>
        <dbReference type="ChEBI" id="CHEBI:58525"/>
        <dbReference type="EC" id="4.3.2.10"/>
    </reaction>
</comment>
<comment type="pathway">
    <text evidence="1">Amino-acid biosynthesis; L-histidine biosynthesis; L-histidine from 5-phospho-alpha-D-ribose 1-diphosphate: step 5/9.</text>
</comment>
<comment type="subunit">
    <text evidence="1">Heterodimer of HisH and HisF.</text>
</comment>
<comment type="subcellular location">
    <subcellularLocation>
        <location evidence="1">Cytoplasm</location>
    </subcellularLocation>
</comment>
<comment type="similarity">
    <text evidence="1">Belongs to the HisA/HisF family.</text>
</comment>
<keyword id="KW-0028">Amino-acid biosynthesis</keyword>
<keyword id="KW-0963">Cytoplasm</keyword>
<keyword id="KW-0368">Histidine biosynthesis</keyword>
<keyword id="KW-0456">Lyase</keyword>
<keyword id="KW-1185">Reference proteome</keyword>
<feature type="chain" id="PRO_1000148922" description="Imidazole glycerol phosphate synthase subunit HisF">
    <location>
        <begin position="1"/>
        <end position="253"/>
    </location>
</feature>
<feature type="active site" evidence="1">
    <location>
        <position position="11"/>
    </location>
</feature>
<feature type="active site" evidence="1">
    <location>
        <position position="130"/>
    </location>
</feature>